<comment type="function">
    <text>The middle wall protein binds to peptidoglycan and to the outer cell wall protein.</text>
</comment>
<comment type="subunit">
    <text>The middle cell wall layer is composed of subunits of the middle cell wall protein. These proteins form a hexagonal array with a lattice constant of 14.5 nM in the middle cell wall layers.</text>
</comment>
<comment type="subcellular location">
    <subcellularLocation>
        <location>Secreted</location>
        <location>Cell wall</location>
        <location>S-layer</location>
    </subcellularLocation>
    <text>This bacterium is covered by a S-layer with hexagonal symmetry.</text>
</comment>
<comment type="sequence caution" evidence="2">
    <conflict type="erroneous initiation">
        <sequence resource="EMBL-CDS" id="AAA22617"/>
    </conflict>
</comment>
<sequence>MKKVVNSVLASALALTVAPMAFAAEEAATTTAPKMDADMEKTVKRLEALGLVAGYGNGEYGVDKTITRAEFATLVVRARGLEQGAKLAQFSNTYTDVKSTDWFAGFVNVASGEEIVKGFPDKSFKPQNQVTYAEAVTMIVRALGYEPSVKGVWPNSMISKASELNIARSITTPNNAATRGDIFKMLDNALRVDLMEQVEFGTDIRHEITKETLLTKYLKVTVRDMEWAQEAGNDSEDLPLVTNVPAIGLGKIKANEVTLNGKDAGIGNTTYKVADGINANDFDGQHVQVWIKDDKEDVIVWMEGSTDQEVIMDRVGEFTLKGKTFEDPKDLSNSDLADLKLELDASEKSYRFNKNTKVTYNFTRFNDPVDGLKEIIKDNADGGFTFGAKVVLDNNNEIAYIHVIDDQSMNKEDEGVKYGSEVISKIDTDKKKITNRDNDKFNDLDGKEEGKDFLVFLNGKPAKFSDLKEGMVYSVYYADGDEDKLLVFATDTVVEGKVDKVVSRNNNDYRLTIGDKTYRVYEGATFSDDGNKDVQDIDKDHWDLVDSLDDETVKLYLDASGRVRHIETKDAIDDRKQKAIVTRSATFNTSKDTWDFRVLTQKGKEITVSLEAKNIYDFDGKNFSRDNKNQDDLEDILVPSKDKDTLLLEVTLDADGKPGKVEFLKPVKVEQESGKAWDDLADEDDDMVGDYEVTDKTAVFNMTGKLEESSKRKELKNAKTAKFKDVADENDLSVIYTVNDKDEVEAIFVVEGDGLTGDAHYGQVIDFGRKGGKDTIRVWEKDGDKVVEKEYKLDGDQDDLKDEDIRRNDFIAFTVDSNDEVVVDDVVEVVNKNAKGMLAEVTDEKGMKDANIDKMVVGLVSDVSKDTITYKDADDNKKKASIKSATVYFDLYDDFGEADGVNEGDYVVMIDSGDISGTKYDYVLIVSDAKTVRKDKLEDDAEAFLKQEPSEKPDPDTKWDALPSKVEGKFTSAGPVKLYRATVELNSKVKAEDVDAIEFYFNGKKVEPSLLNFKDGVITIGYNTEDKVTSSKIKVTNKNGKDSDEATVTFVEA</sequence>
<dbReference type="EMBL" id="M19115">
    <property type="protein sequence ID" value="AAA22760.1"/>
    <property type="molecule type" value="Genomic_DNA"/>
</dbReference>
<dbReference type="EMBL" id="AP008955">
    <property type="protein sequence ID" value="BAH46393.1"/>
    <property type="molecule type" value="Genomic_DNA"/>
</dbReference>
<dbReference type="EMBL" id="M15364">
    <property type="protein sequence ID" value="AAA87321.1"/>
    <property type="molecule type" value="Genomic_DNA"/>
</dbReference>
<dbReference type="EMBL" id="M14238">
    <property type="protein sequence ID" value="AAA22372.1"/>
    <property type="molecule type" value="Genomic_DNA"/>
</dbReference>
<dbReference type="EMBL" id="M31828">
    <property type="protein sequence ID" value="AAA22619.1"/>
    <property type="molecule type" value="Genomic_DNA"/>
</dbReference>
<dbReference type="EMBL" id="M32356">
    <property type="protein sequence ID" value="AAA22617.1"/>
    <property type="status" value="ALT_INIT"/>
    <property type="molecule type" value="Genomic_DNA"/>
</dbReference>
<dbReference type="EMBL" id="M32356">
    <property type="protein sequence ID" value="AAA22618.1"/>
    <property type="molecule type" value="Genomic_DNA"/>
</dbReference>
<dbReference type="PIR" id="A28555">
    <property type="entry name" value="A28555"/>
</dbReference>
<dbReference type="RefSeq" id="WP_015893589.1">
    <property type="nucleotide sequence ID" value="NC_012491.1"/>
</dbReference>
<dbReference type="SMR" id="P06546"/>
<dbReference type="STRING" id="358681.BBR47_54160"/>
<dbReference type="KEGG" id="bbe:BBR47_54160"/>
<dbReference type="eggNOG" id="COG2373">
    <property type="taxonomic scope" value="Bacteria"/>
</dbReference>
<dbReference type="HOGENOM" id="CLU_286159_0_0_9"/>
<dbReference type="Proteomes" id="UP000001877">
    <property type="component" value="Chromosome"/>
</dbReference>
<dbReference type="GO" id="GO:0005576">
    <property type="term" value="C:extracellular region"/>
    <property type="evidence" value="ECO:0007669"/>
    <property type="project" value="UniProtKB-KW"/>
</dbReference>
<dbReference type="GO" id="GO:0030115">
    <property type="term" value="C:S-layer"/>
    <property type="evidence" value="ECO:0007669"/>
    <property type="project" value="UniProtKB-SubCell"/>
</dbReference>
<dbReference type="InterPro" id="IPR001119">
    <property type="entry name" value="SLH_dom"/>
</dbReference>
<dbReference type="Pfam" id="PF00395">
    <property type="entry name" value="SLH"/>
    <property type="match status" value="2"/>
</dbReference>
<dbReference type="PROSITE" id="PS51272">
    <property type="entry name" value="SLH"/>
    <property type="match status" value="2"/>
</dbReference>
<protein>
    <recommendedName>
        <fullName>Middle cell wall protein</fullName>
        <shortName>MWP</shortName>
    </recommendedName>
</protein>
<proteinExistence type="predicted"/>
<organism>
    <name type="scientific">Brevibacillus brevis (strain 47 / JCM 6285 / NBRC 100599)</name>
    <dbReference type="NCBI Taxonomy" id="358681"/>
    <lineage>
        <taxon>Bacteria</taxon>
        <taxon>Bacillati</taxon>
        <taxon>Bacillota</taxon>
        <taxon>Bacilli</taxon>
        <taxon>Bacillales</taxon>
        <taxon>Paenibacillaceae</taxon>
        <taxon>Brevibacillus</taxon>
    </lineage>
</organism>
<name>SLAPM_BREBN</name>
<keyword id="KW-0134">Cell wall</keyword>
<keyword id="KW-1185">Reference proteome</keyword>
<keyword id="KW-0677">Repeat</keyword>
<keyword id="KW-0701">S-layer</keyword>
<keyword id="KW-0964">Secreted</keyword>
<keyword id="KW-0732">Signal</keyword>
<accession>P06546</accession>
<accession>C0Z744</accession>
<accession>O31327</accession>
<accession>Q44953</accession>
<feature type="signal peptide">
    <location>
        <begin position="1"/>
        <end position="23"/>
    </location>
</feature>
<feature type="chain" id="PRO_0000032642" description="Middle cell wall protein">
    <location>
        <begin position="24"/>
        <end position="1053"/>
    </location>
</feature>
<feature type="domain" description="SLH 1" evidence="1">
    <location>
        <begin position="26"/>
        <end position="89"/>
    </location>
</feature>
<feature type="domain" description="SLH 2" evidence="1">
    <location>
        <begin position="90"/>
        <end position="153"/>
    </location>
</feature>
<feature type="domain" description="SLH 3" evidence="1">
    <location>
        <begin position="154"/>
        <end position="203"/>
    </location>
</feature>
<feature type="sequence conflict" description="In Ref. 1; AAA22760 and 4; AAA22372." evidence="2" ref="1 4">
    <original>S</original>
    <variation>R</variation>
    <location>
        <position position="864"/>
    </location>
</feature>
<evidence type="ECO:0000255" key="1">
    <source>
        <dbReference type="PROSITE-ProRule" id="PRU00777"/>
    </source>
</evidence>
<evidence type="ECO:0000305" key="2"/>
<reference key="1">
    <citation type="journal article" date="1988" name="J. Bacteriol.">
        <title>Characterization of the genes for the hexagonally arranged surface layer proteins in protein-producing Bacillus brevis 47: complete nucleotide sequence of the middle wall protein gene.</title>
        <authorList>
            <person name="Tsuboi A."/>
            <person name="Uchihi R."/>
            <person name="Adachi T."/>
            <person name="Sasaki T."/>
            <person name="Hayakawa S."/>
            <person name="Yamagata H."/>
            <person name="Tsukagoshi N."/>
            <person name="Udaka S."/>
        </authorList>
    </citation>
    <scope>NUCLEOTIDE SEQUENCE [GENOMIC DNA]</scope>
</reference>
<reference key="2">
    <citation type="submission" date="2005-03" db="EMBL/GenBank/DDBJ databases">
        <title>Brevibacillus brevis strain 47, complete genome.</title>
        <authorList>
            <person name="Hosoyama A."/>
            <person name="Yamada R."/>
            <person name="Hongo Y."/>
            <person name="Terui Y."/>
            <person name="Ankai A."/>
            <person name="Masuyama W."/>
            <person name="Sekiguchi M."/>
            <person name="Takeda T."/>
            <person name="Asano K."/>
            <person name="Ohji S."/>
            <person name="Ichikawa N."/>
            <person name="Narita S."/>
            <person name="Aoki N."/>
            <person name="Miura H."/>
            <person name="Matsushita S."/>
            <person name="Sekigawa T."/>
            <person name="Yamagata H."/>
            <person name="Yoshikawa H."/>
            <person name="Udaka S."/>
            <person name="Tanikawa S."/>
            <person name="Fujita N."/>
        </authorList>
    </citation>
    <scope>NUCLEOTIDE SEQUENCE [LARGE SCALE GENOMIC DNA]</scope>
    <source>
        <strain>47 / JCM 6285 / NBRC 100599</strain>
    </source>
</reference>
<reference key="3">
    <citation type="journal article" date="1987" name="J. Bacteriol.">
        <title>Cloning and characterization of the 5' region of the cell wall protein gene operon in Bacillus brevis 47.</title>
        <authorList>
            <person name="Yamagata H."/>
            <person name="Adachi T."/>
            <person name="Tsuboi A."/>
            <person name="Takao M."/>
            <person name="Sasaki T."/>
            <person name="Tsukagoshi N."/>
            <person name="Udaka S."/>
        </authorList>
    </citation>
    <scope>NUCLEOTIDE SEQUENCE [GENOMIC DNA] OF 1-200</scope>
</reference>
<reference key="4">
    <citation type="journal article" date="1986" name="J. Bacteriol.">
        <title>Characterization of the genes coding for two major cell wall proteins from protein-producing Bacillus brevis 47: complete nucleotide sequence of the outer wall protein gene.</title>
        <authorList>
            <person name="Tsuboi A."/>
            <person name="Uchihi R."/>
            <person name="Tabata R."/>
            <person name="Takahashi Y."/>
            <person name="Hashiba H."/>
            <person name="Sasaki T."/>
            <person name="Yamagata H."/>
            <person name="Tsukagoshi N."/>
            <person name="Udaka S."/>
        </authorList>
    </citation>
    <scope>NUCLEOTIDE SEQUENCE [GENOMIC DNA] OF 676-1053</scope>
</reference>
<reference key="5">
    <citation type="journal article" date="1989" name="J. Bacteriol.">
        <title>Multiple and tandemly arranged promoters of the cell wall protein gene operon in Bacillus brevis 47.</title>
        <authorList>
            <person name="Adachi T."/>
            <person name="Yamagata H."/>
            <person name="Tsukagoshi N."/>
            <person name="Udaka S."/>
        </authorList>
    </citation>
    <scope>NUCLEOTIDE SEQUENCE [GENOMIC DNA] OF 1-50</scope>
</reference>
<reference key="6">
    <citation type="journal article" date="1989" name="J. Bacteriol.">
        <title>In vitro reconstitution of a hexagonal array with a surface layer protein synthesized by Bacillus subtilis harboring the surface layer protein gene from Bacillus brevis 47.</title>
        <authorList>
            <person name="Tsuboi A."/>
            <person name="Uchihi R."/>
            <person name="Engelhardt H."/>
            <person name="Hattori H."/>
            <person name="Shimizu S."/>
            <person name="Tsukagoshi N."/>
            <person name="Udaka S."/>
        </authorList>
    </citation>
    <scope>NUCLEOTIDE SEQUENCE [GENOMIC DNA] OF 1-50</scope>
</reference>
<reference key="7">
    <citation type="journal article" date="1990" name="J. Bacteriol.">
        <title>Use of both translation initiation sites of the middle wall protein gene in Bacillus brevis 47.</title>
        <authorList>
            <person name="Adachi T."/>
            <person name="Yamagata H."/>
            <person name="Tsukagoshi N."/>
            <person name="Udaka S."/>
        </authorList>
    </citation>
    <scope>NUCLEOTIDE SEQUENCE [GENOMIC DNA] OF 1-41</scope>
</reference>
<gene>
    <name type="ordered locus">BBR47_54160</name>
</gene>